<evidence type="ECO:0000250" key="1">
    <source>
        <dbReference type="UniProtKB" id="P61889"/>
    </source>
</evidence>
<evidence type="ECO:0000269" key="2">
    <source>
    </source>
</evidence>
<evidence type="ECO:0000269" key="3">
    <source>
    </source>
</evidence>
<evidence type="ECO:0000269" key="4">
    <source>
    </source>
</evidence>
<evidence type="ECO:0000269" key="5">
    <source>
    </source>
</evidence>
<evidence type="ECO:0000303" key="6">
    <source>
    </source>
</evidence>
<evidence type="ECO:0000305" key="7"/>
<evidence type="ECO:0007829" key="8">
    <source>
        <dbReference type="PDB" id="1O6Z"/>
    </source>
</evidence>
<evidence type="ECO:0007829" key="9">
    <source>
        <dbReference type="PDB" id="4JCO"/>
    </source>
</evidence>
<comment type="function">
    <text evidence="5">Catalyzes the reversible oxidation of malate to oxaloacetate.</text>
</comment>
<comment type="catalytic activity">
    <reaction evidence="5">
        <text>(S)-malate + NAD(+) = oxaloacetate + NADH + H(+)</text>
        <dbReference type="Rhea" id="RHEA:21432"/>
        <dbReference type="ChEBI" id="CHEBI:15378"/>
        <dbReference type="ChEBI" id="CHEBI:15589"/>
        <dbReference type="ChEBI" id="CHEBI:16452"/>
        <dbReference type="ChEBI" id="CHEBI:57540"/>
        <dbReference type="ChEBI" id="CHEBI:57945"/>
        <dbReference type="EC" id="1.1.1.37"/>
    </reaction>
</comment>
<comment type="biophysicochemical properties">
    <kinetics>
        <KM evidence="5">0.9 mM for oxaloacetate (in the presence of 2 M NaCl)</KM>
        <KM evidence="5">0.7 mM for oxaloacetate (in the presence of 4 M NaCl)</KM>
        <text>kcat is 197 sec(-1) with oxaloacetate as substrate (in the presence of 2 M NaCl). kcat is 69 sec(-1) with oxaloacetate as substrate (in the presence of 4 M NaCl).</text>
    </kinetics>
</comment>
<comment type="subunit">
    <text evidence="2 3 4">Homotetramer; arranged as a dimer of dimers.</text>
</comment>
<comment type="subcellular location">
    <subcellularLocation>
        <location evidence="5">Cytoplasm</location>
    </subcellularLocation>
</comment>
<comment type="miscellaneous">
    <text>The quaternary structure is stabilized by chloride ions bound between the subunits. This may be an adaptation to the halophilic environment.</text>
</comment>
<comment type="similarity">
    <text evidence="7">Belongs to the LDH/MDH superfamily.</text>
</comment>
<keyword id="KW-0002">3D-structure</keyword>
<keyword id="KW-0963">Cytoplasm</keyword>
<keyword id="KW-0903">Direct protein sequencing</keyword>
<keyword id="KW-0520">NAD</keyword>
<keyword id="KW-0560">Oxidoreductase</keyword>
<keyword id="KW-1185">Reference proteome</keyword>
<keyword id="KW-0816">Tricarboxylic acid cycle</keyword>
<accession>Q07841</accession>
<accession>Q5UZ29</accession>
<gene>
    <name type="primary">mdh</name>
    <name type="ordered locus">rrnAC2706</name>
</gene>
<proteinExistence type="evidence at protein level"/>
<dbReference type="EC" id="1.1.1.37" evidence="5"/>
<dbReference type="EMBL" id="M97218">
    <property type="protein sequence ID" value="AAA73368.1"/>
    <property type="molecule type" value="Genomic_DNA"/>
</dbReference>
<dbReference type="EMBL" id="AY596297">
    <property type="protein sequence ID" value="AAV47474.1"/>
    <property type="molecule type" value="Genomic_DNA"/>
</dbReference>
<dbReference type="PIR" id="A49496">
    <property type="entry name" value="A49496"/>
</dbReference>
<dbReference type="RefSeq" id="WP_004959949.1">
    <property type="nucleotide sequence ID" value="NZ_CP039138.1"/>
</dbReference>
<dbReference type="PDB" id="1D3A">
    <property type="method" value="X-ray"/>
    <property type="resolution" value="2.94 A"/>
    <property type="chains" value="A/B=2-304"/>
</dbReference>
<dbReference type="PDB" id="1HLP">
    <property type="method" value="X-ray"/>
    <property type="resolution" value="3.20 A"/>
    <property type="chains" value="A/B=2-304"/>
</dbReference>
<dbReference type="PDB" id="1O6Z">
    <property type="method" value="X-ray"/>
    <property type="resolution" value="1.95 A"/>
    <property type="chains" value="A/B/C/D=2-304"/>
</dbReference>
<dbReference type="PDB" id="2HLP">
    <property type="method" value="X-ray"/>
    <property type="resolution" value="2.59 A"/>
    <property type="chains" value="A/B=2-304"/>
</dbReference>
<dbReference type="PDB" id="2J5K">
    <property type="method" value="X-ray"/>
    <property type="resolution" value="2.00 A"/>
    <property type="chains" value="A/B/C/D=1-304"/>
</dbReference>
<dbReference type="PDB" id="2J5Q">
    <property type="method" value="X-ray"/>
    <property type="resolution" value="2.15 A"/>
    <property type="chains" value="A/B/C/D=1-304"/>
</dbReference>
<dbReference type="PDB" id="2J5R">
    <property type="method" value="X-ray"/>
    <property type="resolution" value="2.25 A"/>
    <property type="chains" value="A/B/C/D=1-304"/>
</dbReference>
<dbReference type="PDB" id="2X0R">
    <property type="method" value="X-ray"/>
    <property type="resolution" value="2.92 A"/>
    <property type="chains" value="A/B=1-304"/>
</dbReference>
<dbReference type="PDB" id="4JCO">
    <property type="method" value="X-ray"/>
    <property type="resolution" value="1.70 A"/>
    <property type="chains" value="A/B/C/D=1-304"/>
</dbReference>
<dbReference type="PDB" id="7Q3X">
    <property type="method" value="X-ray"/>
    <property type="resolution" value="1.95 A"/>
    <property type="chains" value="A/B/C/D=2-304"/>
</dbReference>
<dbReference type="PDBsum" id="1D3A"/>
<dbReference type="PDBsum" id="1HLP"/>
<dbReference type="PDBsum" id="1O6Z"/>
<dbReference type="PDBsum" id="2HLP"/>
<dbReference type="PDBsum" id="2J5K"/>
<dbReference type="PDBsum" id="2J5Q"/>
<dbReference type="PDBsum" id="2J5R"/>
<dbReference type="PDBsum" id="2X0R"/>
<dbReference type="PDBsum" id="4JCO"/>
<dbReference type="PDBsum" id="7Q3X"/>
<dbReference type="SMR" id="Q07841"/>
<dbReference type="STRING" id="272569.rrnAC2706"/>
<dbReference type="PaxDb" id="272569-rrnAC2706"/>
<dbReference type="EnsemblBacteria" id="AAV47474">
    <property type="protein sequence ID" value="AAV47474"/>
    <property type="gene ID" value="rrnAC2706"/>
</dbReference>
<dbReference type="GeneID" id="64824029"/>
<dbReference type="KEGG" id="hma:rrnAC2706"/>
<dbReference type="PATRIC" id="fig|272569.17.peg.3289"/>
<dbReference type="eggNOG" id="arCOG00246">
    <property type="taxonomic scope" value="Archaea"/>
</dbReference>
<dbReference type="HOGENOM" id="CLU_045401_1_1_2"/>
<dbReference type="BRENDA" id="1.1.1.37">
    <property type="organism ID" value="2549"/>
</dbReference>
<dbReference type="EvolutionaryTrace" id="Q07841"/>
<dbReference type="Proteomes" id="UP000001169">
    <property type="component" value="Chromosome I"/>
</dbReference>
<dbReference type="GO" id="GO:0005737">
    <property type="term" value="C:cytoplasm"/>
    <property type="evidence" value="ECO:0007669"/>
    <property type="project" value="UniProtKB-SubCell"/>
</dbReference>
<dbReference type="GO" id="GO:0004459">
    <property type="term" value="F:L-lactate dehydrogenase activity"/>
    <property type="evidence" value="ECO:0007669"/>
    <property type="project" value="TreeGrafter"/>
</dbReference>
<dbReference type="GO" id="GO:0030060">
    <property type="term" value="F:L-malate dehydrogenase (NAD+) activity"/>
    <property type="evidence" value="ECO:0007669"/>
    <property type="project" value="UniProtKB-EC"/>
</dbReference>
<dbReference type="GO" id="GO:0006089">
    <property type="term" value="P:lactate metabolic process"/>
    <property type="evidence" value="ECO:0007669"/>
    <property type="project" value="TreeGrafter"/>
</dbReference>
<dbReference type="GO" id="GO:0006099">
    <property type="term" value="P:tricarboxylic acid cycle"/>
    <property type="evidence" value="ECO:0007669"/>
    <property type="project" value="UniProtKB-KW"/>
</dbReference>
<dbReference type="CDD" id="cd01339">
    <property type="entry name" value="LDH-like_MDH"/>
    <property type="match status" value="1"/>
</dbReference>
<dbReference type="Gene3D" id="3.90.110.10">
    <property type="entry name" value="Lactate dehydrogenase/glycoside hydrolase, family 4, C-terminal"/>
    <property type="match status" value="1"/>
</dbReference>
<dbReference type="Gene3D" id="3.40.50.720">
    <property type="entry name" value="NAD(P)-binding Rossmann-like Domain"/>
    <property type="match status" value="1"/>
</dbReference>
<dbReference type="InterPro" id="IPR001557">
    <property type="entry name" value="L-lactate/malate_DH"/>
</dbReference>
<dbReference type="InterPro" id="IPR022383">
    <property type="entry name" value="Lactate/malate_DH_C"/>
</dbReference>
<dbReference type="InterPro" id="IPR001236">
    <property type="entry name" value="Lactate/malate_DH_N"/>
</dbReference>
<dbReference type="InterPro" id="IPR015955">
    <property type="entry name" value="Lactate_DH/Glyco_Ohase_4_C"/>
</dbReference>
<dbReference type="InterPro" id="IPR011275">
    <property type="entry name" value="Malate_DH_type3"/>
</dbReference>
<dbReference type="InterPro" id="IPR053411">
    <property type="entry name" value="MDH"/>
</dbReference>
<dbReference type="InterPro" id="IPR036291">
    <property type="entry name" value="NAD(P)-bd_dom_sf"/>
</dbReference>
<dbReference type="NCBIfam" id="NF041314">
    <property type="entry name" value="Malate_DH_Halo"/>
    <property type="match status" value="1"/>
</dbReference>
<dbReference type="NCBIfam" id="NF004863">
    <property type="entry name" value="PRK06223.1"/>
    <property type="match status" value="1"/>
</dbReference>
<dbReference type="PANTHER" id="PTHR43128">
    <property type="entry name" value="L-2-HYDROXYCARBOXYLATE DEHYDROGENASE (NAD(P)(+))"/>
    <property type="match status" value="1"/>
</dbReference>
<dbReference type="PANTHER" id="PTHR43128:SF16">
    <property type="entry name" value="L-LACTATE DEHYDROGENASE"/>
    <property type="match status" value="1"/>
</dbReference>
<dbReference type="Pfam" id="PF02866">
    <property type="entry name" value="Ldh_1_C"/>
    <property type="match status" value="1"/>
</dbReference>
<dbReference type="Pfam" id="PF00056">
    <property type="entry name" value="Ldh_1_N"/>
    <property type="match status" value="1"/>
</dbReference>
<dbReference type="PIRSF" id="PIRSF000102">
    <property type="entry name" value="Lac_mal_DH"/>
    <property type="match status" value="1"/>
</dbReference>
<dbReference type="PRINTS" id="PR00086">
    <property type="entry name" value="LLDHDRGNASE"/>
</dbReference>
<dbReference type="SUPFAM" id="SSF56327">
    <property type="entry name" value="LDH C-terminal domain-like"/>
    <property type="match status" value="1"/>
</dbReference>
<dbReference type="SUPFAM" id="SSF51735">
    <property type="entry name" value="NAD(P)-binding Rossmann-fold domains"/>
    <property type="match status" value="1"/>
</dbReference>
<sequence length="304" mass="32808">MTKVSVVGAAGTVGAAAGYNIALRDIADEVVFVDIPDKEDDTVGQAADTNHGIAYDSNTRVRQGGYEDTAGSDVVVITAGIPRQPGQTRIDLAGDNAPIMEDIQSSLDEHNDDYISLTTSNPVDLLNRHLYEAGDRSREQVIGFGGRLDSARFRYVLSEEFDAPVQNVEGTILGEHGDAQVPVFSKVRVDGTDPEFSGDEKEQLLGDLQESAMDVIERKGATEWGPARGVAHMVEAILHDTGEVLPASVKLEGEFGHEDTAFGVPVRLGSNGVEEIVEWDLDDYEQDLMADAAEKLSDQYDKIS</sequence>
<reference key="1">
    <citation type="journal article" date="1993" name="Biochemistry">
        <title>Cloning, sequencing, and expression in Escherichia coli of the gene coding for malate dehydrogenase of the extremely halophilic archaebacterium Haloarcula marismortui.</title>
        <authorList>
            <person name="Cendrin F."/>
            <person name="Chroboczek J."/>
            <person name="Zaccai G."/>
            <person name="Eisenberg H."/>
            <person name="Mevarech M."/>
        </authorList>
    </citation>
    <scope>NUCLEOTIDE SEQUENCE [GENOMIC DNA]</scope>
    <scope>PROTEIN SEQUENCE OF 1-55</scope>
    <scope>FUNCTION</scope>
    <scope>CATALYTIC ACTIVITY</scope>
    <scope>BIOPHYSICOCHEMICAL PROPERTIES</scope>
    <scope>SUBCELLULAR LOCATION</scope>
    <scope>MUTAGENESIS OF ARG-83</scope>
</reference>
<reference key="2">
    <citation type="journal article" date="2004" name="Genome Res.">
        <title>Genome sequence of Haloarcula marismortui: a halophilic archaeon from the Dead Sea.</title>
        <authorList>
            <person name="Baliga N.S."/>
            <person name="Bonneau R."/>
            <person name="Facciotti M.T."/>
            <person name="Pan M."/>
            <person name="Glusman G."/>
            <person name="Deutsch E.W."/>
            <person name="Shannon P."/>
            <person name="Chiu Y."/>
            <person name="Weng R.S."/>
            <person name="Gan R.R."/>
            <person name="Hung P."/>
            <person name="Date S.V."/>
            <person name="Marcotte E."/>
            <person name="Hood L."/>
            <person name="Ng W.V."/>
        </authorList>
    </citation>
    <scope>NUCLEOTIDE SEQUENCE [LARGE SCALE GENOMIC DNA]</scope>
    <source>
        <strain>ATCC 43049 / DSM 3752 / JCM 8966 / VKM B-1809</strain>
    </source>
</reference>
<reference key="3">
    <citation type="journal article" date="2000" name="Biochemistry">
        <title>Insights into the molecular relationships between malate and lactate dehydrogenases: structural and biochemical properties of monomeric and dimeric intermediates of a mutant of tetrameric L-[LDH-like] malate dehydrogenase from the halophilic archaeon Haloarcula marismortui.</title>
        <authorList>
            <person name="Madern D."/>
            <person name="Ebel C."/>
            <person name="Mevarech M."/>
            <person name="Richard S.B."/>
            <person name="Pfister C."/>
            <person name="Zaccai G."/>
        </authorList>
    </citation>
    <scope>SUBUNIT</scope>
</reference>
<reference key="4">
    <citation type="journal article" date="1995" name="Science">
        <title>Structural features that stabilize halophilic malate-dehydrogenase from an archaebacterium.</title>
        <authorList>
            <person name="Dym O."/>
            <person name="Mevarech M."/>
            <person name="Sussman J.L."/>
        </authorList>
    </citation>
    <scope>X-RAY CRYSTALLOGRAPHY (3.2 ANGSTROMS)</scope>
</reference>
<reference key="5">
    <citation type="journal article" date="2000" name="Biochemistry">
        <title>Halophilic adaptation: novel solvent protein interactions observed in the 2.9 and 2.6 A resolution structures of the wild type and a mutant of malate dehydrogenase from Haloarcula marismortui.</title>
        <authorList>
            <person name="Richard S.B."/>
            <person name="Madern D."/>
            <person name="Garcin E."/>
            <person name="Zaccai G."/>
        </authorList>
    </citation>
    <scope>X-RAY CRYSTALLOGRAPHY (2.59 ANGSTROMS)</scope>
    <scope>SUBUNIT</scope>
</reference>
<reference key="6">
    <citation type="journal article" date="2003" name="J. Mol. Biol.">
        <title>The oligomeric states of Haloarcula marismortui malate dehydrogenase are modulated by solvent components as shown by crystallographic and biochemical studies.</title>
        <authorList>
            <person name="Irimia A."/>
            <person name="Ebel C."/>
            <person name="Madern D."/>
            <person name="Richard S.B."/>
            <person name="Cosenza L.W."/>
            <person name="Zaccai G."/>
            <person name="Vellieux F.M.D."/>
        </authorList>
    </citation>
    <scope>X-RAY CRYSTALLOGRAPHY (1.95 ANGSTROMS) IN COMPLEX WITH NAD</scope>
    <scope>SUBUNIT</scope>
</reference>
<organism>
    <name type="scientific">Haloarcula marismortui (strain ATCC 43049 / DSM 3752 / JCM 8966 / VKM B-1809)</name>
    <name type="common">Halobacterium marismortui</name>
    <dbReference type="NCBI Taxonomy" id="272569"/>
    <lineage>
        <taxon>Archaea</taxon>
        <taxon>Methanobacteriati</taxon>
        <taxon>Methanobacteriota</taxon>
        <taxon>Stenosarchaea group</taxon>
        <taxon>Halobacteria</taxon>
        <taxon>Halobacteriales</taxon>
        <taxon>Haloarculaceae</taxon>
        <taxon>Haloarcula</taxon>
    </lineage>
</organism>
<feature type="chain" id="PRO_0000113481" description="Malate dehydrogenase">
    <location>
        <begin position="1"/>
        <end position="304"/>
    </location>
</feature>
<feature type="active site" description="Proton acceptor" evidence="1">
    <location>
        <position position="176"/>
    </location>
</feature>
<feature type="binding site" evidence="4">
    <location>
        <begin position="8"/>
        <end position="14"/>
    </location>
    <ligand>
        <name>NAD(+)</name>
        <dbReference type="ChEBI" id="CHEBI:57540"/>
    </ligand>
</feature>
<feature type="binding site" evidence="4">
    <location>
        <position position="34"/>
    </location>
    <ligand>
        <name>NAD(+)</name>
        <dbReference type="ChEBI" id="CHEBI:57540"/>
    </ligand>
</feature>
<feature type="binding site" evidence="1">
    <location>
        <position position="83"/>
    </location>
    <ligand>
        <name>substrate</name>
    </ligand>
</feature>
<feature type="binding site" evidence="1">
    <location>
        <position position="89"/>
    </location>
    <ligand>
        <name>substrate</name>
    </ligand>
</feature>
<feature type="binding site" evidence="4">
    <location>
        <position position="96"/>
    </location>
    <ligand>
        <name>NAD(+)</name>
        <dbReference type="ChEBI" id="CHEBI:57540"/>
    </ligand>
</feature>
<feature type="binding site" evidence="4">
    <location>
        <begin position="119"/>
        <end position="121"/>
    </location>
    <ligand>
        <name>NAD(+)</name>
        <dbReference type="ChEBI" id="CHEBI:57540"/>
    </ligand>
</feature>
<feature type="binding site" evidence="1">
    <location>
        <position position="121"/>
    </location>
    <ligand>
        <name>substrate</name>
    </ligand>
</feature>
<feature type="binding site" evidence="1">
    <location>
        <position position="152"/>
    </location>
    <ligand>
        <name>substrate</name>
    </ligand>
</feature>
<feature type="mutagenesis site" description="Substrate specificity changes from oxaloacetate to pyruvate." evidence="5">
    <original>R</original>
    <variation>Q</variation>
    <location>
        <position position="83"/>
    </location>
</feature>
<feature type="sequence conflict" description="In Ref. 1; AA sequence." evidence="7" ref="1">
    <original>Y</original>
    <variation>T</variation>
    <location>
        <position position="19"/>
    </location>
</feature>
<feature type="strand" evidence="9">
    <location>
        <begin position="3"/>
        <end position="7"/>
    </location>
</feature>
<feature type="turn" evidence="9">
    <location>
        <begin position="8"/>
        <end position="10"/>
    </location>
</feature>
<feature type="helix" evidence="9">
    <location>
        <begin position="12"/>
        <end position="23"/>
    </location>
</feature>
<feature type="strand" evidence="9">
    <location>
        <begin position="28"/>
        <end position="33"/>
    </location>
</feature>
<feature type="helix" evidence="9">
    <location>
        <begin position="36"/>
        <end position="38"/>
    </location>
</feature>
<feature type="helix" evidence="9">
    <location>
        <begin position="39"/>
        <end position="53"/>
    </location>
</feature>
<feature type="turn" evidence="9">
    <location>
        <begin position="54"/>
        <end position="56"/>
    </location>
</feature>
<feature type="strand" evidence="9">
    <location>
        <begin position="60"/>
        <end position="63"/>
    </location>
</feature>
<feature type="helix" evidence="9">
    <location>
        <begin position="66"/>
        <end position="69"/>
    </location>
</feature>
<feature type="strand" evidence="9">
    <location>
        <begin position="73"/>
        <end position="77"/>
    </location>
</feature>
<feature type="helix" evidence="9">
    <location>
        <begin position="89"/>
        <end position="108"/>
    </location>
</feature>
<feature type="strand" evidence="9">
    <location>
        <begin position="115"/>
        <end position="118"/>
    </location>
</feature>
<feature type="helix" evidence="9">
    <location>
        <begin position="123"/>
        <end position="133"/>
    </location>
</feature>
<feature type="strand" evidence="8">
    <location>
        <begin position="134"/>
        <end position="136"/>
    </location>
</feature>
<feature type="helix" evidence="9">
    <location>
        <begin position="138"/>
        <end position="140"/>
    </location>
</feature>
<feature type="strand" evidence="9">
    <location>
        <begin position="141"/>
        <end position="143"/>
    </location>
</feature>
<feature type="helix" evidence="9">
    <location>
        <begin position="146"/>
        <end position="161"/>
    </location>
</feature>
<feature type="helix" evidence="9">
    <location>
        <begin position="165"/>
        <end position="167"/>
    </location>
</feature>
<feature type="strand" evidence="9">
    <location>
        <begin position="172"/>
        <end position="174"/>
    </location>
</feature>
<feature type="strand" evidence="9">
    <location>
        <begin position="180"/>
        <end position="182"/>
    </location>
</feature>
<feature type="helix" evidence="9">
    <location>
        <begin position="184"/>
        <end position="186"/>
    </location>
</feature>
<feature type="helix" evidence="9">
    <location>
        <begin position="198"/>
        <end position="216"/>
    </location>
</feature>
<feature type="turn" evidence="9">
    <location>
        <begin position="217"/>
        <end position="219"/>
    </location>
</feature>
<feature type="helix" evidence="9">
    <location>
        <begin position="224"/>
        <end position="238"/>
    </location>
</feature>
<feature type="strand" evidence="9">
    <location>
        <begin position="244"/>
        <end position="253"/>
    </location>
</feature>
<feature type="helix" evidence="9">
    <location>
        <begin position="254"/>
        <end position="256"/>
    </location>
</feature>
<feature type="strand" evidence="9">
    <location>
        <begin position="258"/>
        <end position="269"/>
    </location>
</feature>
<feature type="strand" evidence="9">
    <location>
        <begin position="272"/>
        <end position="276"/>
    </location>
</feature>
<feature type="helix" evidence="9">
    <location>
        <begin position="283"/>
        <end position="303"/>
    </location>
</feature>
<name>MDH_HALMA</name>
<protein>
    <recommendedName>
        <fullName evidence="6">Malate dehydrogenase</fullName>
        <ecNumber evidence="5">1.1.1.37</ecNumber>
    </recommendedName>
</protein>